<organism>
    <name type="scientific">Cyrilla racemiflora</name>
    <name type="common">Swamp titi</name>
    <dbReference type="NCBI Taxonomy" id="4341"/>
    <lineage>
        <taxon>Eukaryota</taxon>
        <taxon>Viridiplantae</taxon>
        <taxon>Streptophyta</taxon>
        <taxon>Embryophyta</taxon>
        <taxon>Tracheophyta</taxon>
        <taxon>Spermatophyta</taxon>
        <taxon>Magnoliopsida</taxon>
        <taxon>eudicotyledons</taxon>
        <taxon>Gunneridae</taxon>
        <taxon>Pentapetalae</taxon>
        <taxon>asterids</taxon>
        <taxon>Ericales</taxon>
        <taxon>Cyrillaceae</taxon>
        <taxon>Cyrilla</taxon>
    </lineage>
</organism>
<evidence type="ECO:0000255" key="1">
    <source>
        <dbReference type="HAMAP-Rule" id="MF_01390"/>
    </source>
</evidence>
<keyword id="KW-0150">Chloroplast</keyword>
<keyword id="KW-0507">mRNA processing</keyword>
<keyword id="KW-0934">Plastid</keyword>
<keyword id="KW-0694">RNA-binding</keyword>
<keyword id="KW-0819">tRNA processing</keyword>
<dbReference type="EMBL" id="AF380080">
    <property type="protein sequence ID" value="AAL60376.1"/>
    <property type="molecule type" value="Genomic_DNA"/>
</dbReference>
<dbReference type="GO" id="GO:0009507">
    <property type="term" value="C:chloroplast"/>
    <property type="evidence" value="ECO:0007669"/>
    <property type="project" value="UniProtKB-SubCell"/>
</dbReference>
<dbReference type="GO" id="GO:0003723">
    <property type="term" value="F:RNA binding"/>
    <property type="evidence" value="ECO:0007669"/>
    <property type="project" value="UniProtKB-KW"/>
</dbReference>
<dbReference type="GO" id="GO:0006397">
    <property type="term" value="P:mRNA processing"/>
    <property type="evidence" value="ECO:0007669"/>
    <property type="project" value="UniProtKB-KW"/>
</dbReference>
<dbReference type="GO" id="GO:0008380">
    <property type="term" value="P:RNA splicing"/>
    <property type="evidence" value="ECO:0007669"/>
    <property type="project" value="UniProtKB-UniRule"/>
</dbReference>
<dbReference type="GO" id="GO:0008033">
    <property type="term" value="P:tRNA processing"/>
    <property type="evidence" value="ECO:0007669"/>
    <property type="project" value="UniProtKB-KW"/>
</dbReference>
<dbReference type="HAMAP" id="MF_01390">
    <property type="entry name" value="MatK"/>
    <property type="match status" value="1"/>
</dbReference>
<dbReference type="InterPro" id="IPR024937">
    <property type="entry name" value="Domain_X"/>
</dbReference>
<dbReference type="InterPro" id="IPR002866">
    <property type="entry name" value="Maturase_MatK"/>
</dbReference>
<dbReference type="InterPro" id="IPR024942">
    <property type="entry name" value="Maturase_MatK_N"/>
</dbReference>
<dbReference type="PANTHER" id="PTHR34811">
    <property type="entry name" value="MATURASE K"/>
    <property type="match status" value="1"/>
</dbReference>
<dbReference type="PANTHER" id="PTHR34811:SF1">
    <property type="entry name" value="MATURASE K"/>
    <property type="match status" value="1"/>
</dbReference>
<dbReference type="Pfam" id="PF01348">
    <property type="entry name" value="Intron_maturas2"/>
    <property type="match status" value="1"/>
</dbReference>
<dbReference type="Pfam" id="PF01824">
    <property type="entry name" value="MatK_N"/>
    <property type="match status" value="1"/>
</dbReference>
<geneLocation type="chloroplast"/>
<protein>
    <recommendedName>
        <fullName evidence="1">Maturase K</fullName>
    </recommendedName>
    <alternativeName>
        <fullName evidence="1">Intron maturase</fullName>
    </alternativeName>
</protein>
<sequence>MEEFKRYLELDRSQQHDFIYPLIFQESIYALAHDHGLNRSLLLENEGYDNKSSLLIVKRLITHLITQMYQQNRFIFSANDSNQNHFLGHNTNLYSQIILEGFAVVVEIPFSLRLISSLEGKEIVKSHNLRSIHSIFPFLEDKISHLNYVLDILIPHSIHLEILVQTLRYWVKDASSLHLLRFFLHEYRNWNSLITPNKSSFSFSKRNQRLFLFLYNFHVCEYESIFVFLRNQSSHLRSISSGTFLERIYFYRKIEHFVFVEVFTKDFQTVLWLFKDPFLHYVRYQGKSLLAAKGASLLMNKWKYYFVNFWQCYFSMWSQPRRIHINPLSNHSLDFLGYLSSMRLNPSMVRSQMLENSVLLGNAIKKFDTTVPITPLIGSLSKAKFCNVLGHPLSKPAWADLSDSDIIDRFGCIYRNLSHYHSGSLKKKSLYQIKYILRLSCARTLARKHKSTVRAFLKRLGVELLEEFFTEEEQVFYLTFPKASSPSRGLYRIYRKRVWYLDIICINDLANHS</sequence>
<feature type="chain" id="PRO_0000143353" description="Maturase K">
    <location>
        <begin position="1"/>
        <end position="513"/>
    </location>
</feature>
<proteinExistence type="inferred from homology"/>
<comment type="function">
    <text evidence="1">Usually encoded in the trnK tRNA gene intron. Probably assists in splicing its own and other chloroplast group II introns.</text>
</comment>
<comment type="subcellular location">
    <subcellularLocation>
        <location>Plastid</location>
        <location>Chloroplast</location>
    </subcellularLocation>
</comment>
<comment type="similarity">
    <text evidence="1">Belongs to the intron maturase 2 family. MatK subfamily.</text>
</comment>
<reference key="1">
    <citation type="journal article" date="2001" name="Am. J. Bot.">
        <title>Phylogenetic relationships of Theaceae inferred from chloroplast DNA sequence data.</title>
        <authorList>
            <person name="Prince L.M."/>
            <person name="Parks C.R."/>
        </authorList>
    </citation>
    <scope>NUCLEOTIDE SEQUENCE [GENOMIC DNA]</scope>
    <source>
        <tissue>Leaf</tissue>
    </source>
</reference>
<name>MATK_CYRRA</name>
<accession>Q8WIV4</accession>
<gene>
    <name evidence="1" type="primary">matK</name>
</gene>